<name>XYLA_SALCH</name>
<accession>Q57IG0</accession>
<protein>
    <recommendedName>
        <fullName evidence="1">Xylose isomerase</fullName>
        <ecNumber evidence="1">5.3.1.5</ecNumber>
    </recommendedName>
</protein>
<sequence length="440" mass="49701">MQAYFDQLDRVRYEGPQSTNPLAFRHYNPDELVLGKRMEDHLRFAACYWHTFCWNGADMFGVGAFNRPWQQPGEALELAKRKADVAFEFFHKLNVPFYCFHDVDVSPEGASLKEYKNNFAQMVDVLAAKQEQSGVKLLWGTANCFTNPRYGAGAATNPDPEVFSWAATQVVTAMNATHKLGGENYVLWGGREGYETLLNTDLRQEREQIGRFMQMVVEHKHKMGFQGTLLIEPKPQEPTKHQYDYDVATVYGFLKQFGLEKEIKVNIEANHATLAGHSFHHEIATAIALGIFGSVDANRGDAQLGWDTDQFPISVEENALVMYEILKAGGFTTGGLNFDAKVRRQSTDKYDLFYGHIGAMDTMALSLKIAARMVEDGELDKRVAKRYAGWNGELGQQILKGQLSLGELAQYAEQHNLAPVHQSGHQELLENLVNRYLFDK</sequence>
<keyword id="KW-0119">Carbohydrate metabolism</keyword>
<keyword id="KW-0963">Cytoplasm</keyword>
<keyword id="KW-0413">Isomerase</keyword>
<keyword id="KW-0460">Magnesium</keyword>
<keyword id="KW-0479">Metal-binding</keyword>
<keyword id="KW-0859">Xylose metabolism</keyword>
<feature type="chain" id="PRO_0000236970" description="Xylose isomerase">
    <location>
        <begin position="1"/>
        <end position="440"/>
    </location>
</feature>
<feature type="active site" evidence="1">
    <location>
        <position position="101"/>
    </location>
</feature>
<feature type="active site" evidence="1">
    <location>
        <position position="104"/>
    </location>
</feature>
<feature type="binding site" evidence="1">
    <location>
        <position position="232"/>
    </location>
    <ligand>
        <name>Mg(2+)</name>
        <dbReference type="ChEBI" id="CHEBI:18420"/>
        <label>1</label>
    </ligand>
</feature>
<feature type="binding site" evidence="1">
    <location>
        <position position="268"/>
    </location>
    <ligand>
        <name>Mg(2+)</name>
        <dbReference type="ChEBI" id="CHEBI:18420"/>
        <label>1</label>
    </ligand>
</feature>
<feature type="binding site" evidence="1">
    <location>
        <position position="268"/>
    </location>
    <ligand>
        <name>Mg(2+)</name>
        <dbReference type="ChEBI" id="CHEBI:18420"/>
        <label>2</label>
    </ligand>
</feature>
<feature type="binding site" evidence="1">
    <location>
        <position position="271"/>
    </location>
    <ligand>
        <name>Mg(2+)</name>
        <dbReference type="ChEBI" id="CHEBI:18420"/>
        <label>2</label>
    </ligand>
</feature>
<feature type="binding site" evidence="1">
    <location>
        <position position="296"/>
    </location>
    <ligand>
        <name>Mg(2+)</name>
        <dbReference type="ChEBI" id="CHEBI:18420"/>
        <label>1</label>
    </ligand>
</feature>
<feature type="binding site" evidence="1">
    <location>
        <position position="307"/>
    </location>
    <ligand>
        <name>Mg(2+)</name>
        <dbReference type="ChEBI" id="CHEBI:18420"/>
        <label>2</label>
    </ligand>
</feature>
<feature type="binding site" evidence="1">
    <location>
        <position position="309"/>
    </location>
    <ligand>
        <name>Mg(2+)</name>
        <dbReference type="ChEBI" id="CHEBI:18420"/>
        <label>2</label>
    </ligand>
</feature>
<feature type="binding site" evidence="1">
    <location>
        <position position="339"/>
    </location>
    <ligand>
        <name>Mg(2+)</name>
        <dbReference type="ChEBI" id="CHEBI:18420"/>
        <label>1</label>
    </ligand>
</feature>
<dbReference type="EC" id="5.3.1.5" evidence="1"/>
<dbReference type="EMBL" id="AE017220">
    <property type="protein sequence ID" value="AAX67502.1"/>
    <property type="molecule type" value="Genomic_DNA"/>
</dbReference>
<dbReference type="RefSeq" id="WP_001149561.1">
    <property type="nucleotide sequence ID" value="NC_006905.1"/>
</dbReference>
<dbReference type="SMR" id="Q57IG0"/>
<dbReference type="KEGG" id="sec:SCH_3596"/>
<dbReference type="HOGENOM" id="CLU_037261_1_0_6"/>
<dbReference type="Proteomes" id="UP000000538">
    <property type="component" value="Chromosome"/>
</dbReference>
<dbReference type="GO" id="GO:0005737">
    <property type="term" value="C:cytoplasm"/>
    <property type="evidence" value="ECO:0007669"/>
    <property type="project" value="UniProtKB-SubCell"/>
</dbReference>
<dbReference type="GO" id="GO:0000287">
    <property type="term" value="F:magnesium ion binding"/>
    <property type="evidence" value="ECO:0007669"/>
    <property type="project" value="UniProtKB-UniRule"/>
</dbReference>
<dbReference type="GO" id="GO:0009045">
    <property type="term" value="F:xylose isomerase activity"/>
    <property type="evidence" value="ECO:0007669"/>
    <property type="project" value="UniProtKB-UniRule"/>
</dbReference>
<dbReference type="GO" id="GO:0042732">
    <property type="term" value="P:D-xylose metabolic process"/>
    <property type="evidence" value="ECO:0007669"/>
    <property type="project" value="UniProtKB-UniRule"/>
</dbReference>
<dbReference type="FunFam" id="3.20.20.150:FF:000002">
    <property type="entry name" value="Xylose isomerase"/>
    <property type="match status" value="1"/>
</dbReference>
<dbReference type="Gene3D" id="3.20.20.150">
    <property type="entry name" value="Divalent-metal-dependent TIM barrel enzymes"/>
    <property type="match status" value="1"/>
</dbReference>
<dbReference type="HAMAP" id="MF_00455">
    <property type="entry name" value="Xylose_isom_A"/>
    <property type="match status" value="1"/>
</dbReference>
<dbReference type="InterPro" id="IPR036237">
    <property type="entry name" value="Xyl_isomerase-like_sf"/>
</dbReference>
<dbReference type="InterPro" id="IPR013452">
    <property type="entry name" value="Xylose_isom_bac"/>
</dbReference>
<dbReference type="InterPro" id="IPR001998">
    <property type="entry name" value="Xylose_isomerase"/>
</dbReference>
<dbReference type="NCBIfam" id="NF003998">
    <property type="entry name" value="PRK05474.1"/>
    <property type="match status" value="1"/>
</dbReference>
<dbReference type="NCBIfam" id="TIGR02630">
    <property type="entry name" value="xylose_isom_A"/>
    <property type="match status" value="1"/>
</dbReference>
<dbReference type="PANTHER" id="PTHR48408">
    <property type="match status" value="1"/>
</dbReference>
<dbReference type="PANTHER" id="PTHR48408:SF1">
    <property type="entry name" value="XYLOSE ISOMERASE"/>
    <property type="match status" value="1"/>
</dbReference>
<dbReference type="PRINTS" id="PR00688">
    <property type="entry name" value="XYLOSISMRASE"/>
</dbReference>
<dbReference type="SUPFAM" id="SSF51658">
    <property type="entry name" value="Xylose isomerase-like"/>
    <property type="match status" value="1"/>
</dbReference>
<dbReference type="PROSITE" id="PS51415">
    <property type="entry name" value="XYLOSE_ISOMERASE"/>
    <property type="match status" value="1"/>
</dbReference>
<evidence type="ECO:0000255" key="1">
    <source>
        <dbReference type="HAMAP-Rule" id="MF_00455"/>
    </source>
</evidence>
<organism>
    <name type="scientific">Salmonella choleraesuis (strain SC-B67)</name>
    <dbReference type="NCBI Taxonomy" id="321314"/>
    <lineage>
        <taxon>Bacteria</taxon>
        <taxon>Pseudomonadati</taxon>
        <taxon>Pseudomonadota</taxon>
        <taxon>Gammaproteobacteria</taxon>
        <taxon>Enterobacterales</taxon>
        <taxon>Enterobacteriaceae</taxon>
        <taxon>Salmonella</taxon>
    </lineage>
</organism>
<reference key="1">
    <citation type="journal article" date="2005" name="Nucleic Acids Res.">
        <title>The genome sequence of Salmonella enterica serovar Choleraesuis, a highly invasive and resistant zoonotic pathogen.</title>
        <authorList>
            <person name="Chiu C.-H."/>
            <person name="Tang P."/>
            <person name="Chu C."/>
            <person name="Hu S."/>
            <person name="Bao Q."/>
            <person name="Yu J."/>
            <person name="Chou Y.-Y."/>
            <person name="Wang H.-S."/>
            <person name="Lee Y.-S."/>
        </authorList>
    </citation>
    <scope>NUCLEOTIDE SEQUENCE [LARGE SCALE GENOMIC DNA]</scope>
    <source>
        <strain>SC-B67</strain>
    </source>
</reference>
<proteinExistence type="inferred from homology"/>
<comment type="catalytic activity">
    <reaction evidence="1">
        <text>alpha-D-xylose = alpha-D-xylulofuranose</text>
        <dbReference type="Rhea" id="RHEA:22816"/>
        <dbReference type="ChEBI" id="CHEBI:28518"/>
        <dbReference type="ChEBI" id="CHEBI:188998"/>
        <dbReference type="EC" id="5.3.1.5"/>
    </reaction>
</comment>
<comment type="cofactor">
    <cofactor evidence="1">
        <name>Mg(2+)</name>
        <dbReference type="ChEBI" id="CHEBI:18420"/>
    </cofactor>
    <text evidence="1">Binds 2 magnesium ions per subunit.</text>
</comment>
<comment type="subunit">
    <text evidence="1">Homotetramer.</text>
</comment>
<comment type="subcellular location">
    <subcellularLocation>
        <location evidence="1">Cytoplasm</location>
    </subcellularLocation>
</comment>
<comment type="similarity">
    <text evidence="1">Belongs to the xylose isomerase family.</text>
</comment>
<gene>
    <name evidence="1" type="primary">xylA</name>
    <name type="ordered locus">SCH_3596</name>
</gene>